<feature type="chain" id="PRO_1000051453" description="Asparagine--tRNA ligase">
    <location>
        <begin position="1"/>
        <end position="448"/>
    </location>
</feature>
<dbReference type="EC" id="6.1.1.22" evidence="1"/>
<dbReference type="EMBL" id="CP000419">
    <property type="protein sequence ID" value="ABJ66102.1"/>
    <property type="molecule type" value="Genomic_DNA"/>
</dbReference>
<dbReference type="RefSeq" id="WP_011681059.1">
    <property type="nucleotide sequence ID" value="NC_008532.1"/>
</dbReference>
<dbReference type="SMR" id="Q03L20"/>
<dbReference type="KEGG" id="ste:STER_0864"/>
<dbReference type="HOGENOM" id="CLU_004553_2_0_9"/>
<dbReference type="GO" id="GO:0005737">
    <property type="term" value="C:cytoplasm"/>
    <property type="evidence" value="ECO:0007669"/>
    <property type="project" value="UniProtKB-SubCell"/>
</dbReference>
<dbReference type="GO" id="GO:0004816">
    <property type="term" value="F:asparagine-tRNA ligase activity"/>
    <property type="evidence" value="ECO:0007669"/>
    <property type="project" value="UniProtKB-UniRule"/>
</dbReference>
<dbReference type="GO" id="GO:0005524">
    <property type="term" value="F:ATP binding"/>
    <property type="evidence" value="ECO:0007669"/>
    <property type="project" value="UniProtKB-UniRule"/>
</dbReference>
<dbReference type="GO" id="GO:0140096">
    <property type="term" value="F:catalytic activity, acting on a protein"/>
    <property type="evidence" value="ECO:0007669"/>
    <property type="project" value="UniProtKB-ARBA"/>
</dbReference>
<dbReference type="GO" id="GO:0003676">
    <property type="term" value="F:nucleic acid binding"/>
    <property type="evidence" value="ECO:0007669"/>
    <property type="project" value="InterPro"/>
</dbReference>
<dbReference type="GO" id="GO:0016740">
    <property type="term" value="F:transferase activity"/>
    <property type="evidence" value="ECO:0007669"/>
    <property type="project" value="UniProtKB-ARBA"/>
</dbReference>
<dbReference type="GO" id="GO:0006421">
    <property type="term" value="P:asparaginyl-tRNA aminoacylation"/>
    <property type="evidence" value="ECO:0007669"/>
    <property type="project" value="UniProtKB-UniRule"/>
</dbReference>
<dbReference type="CDD" id="cd04323">
    <property type="entry name" value="AsnRS_cyto_like_N"/>
    <property type="match status" value="1"/>
</dbReference>
<dbReference type="CDD" id="cd00776">
    <property type="entry name" value="AsxRS_core"/>
    <property type="match status" value="1"/>
</dbReference>
<dbReference type="Gene3D" id="3.30.930.10">
    <property type="entry name" value="Bira Bifunctional Protein, Domain 2"/>
    <property type="match status" value="1"/>
</dbReference>
<dbReference type="Gene3D" id="2.40.50.140">
    <property type="entry name" value="Nucleic acid-binding proteins"/>
    <property type="match status" value="1"/>
</dbReference>
<dbReference type="HAMAP" id="MF_00534">
    <property type="entry name" value="Asn_tRNA_synth"/>
    <property type="match status" value="1"/>
</dbReference>
<dbReference type="InterPro" id="IPR004364">
    <property type="entry name" value="Aa-tRNA-synt_II"/>
</dbReference>
<dbReference type="InterPro" id="IPR006195">
    <property type="entry name" value="aa-tRNA-synth_II"/>
</dbReference>
<dbReference type="InterPro" id="IPR045864">
    <property type="entry name" value="aa-tRNA-synth_II/BPL/LPL"/>
</dbReference>
<dbReference type="InterPro" id="IPR004522">
    <property type="entry name" value="Asn-tRNA-ligase"/>
</dbReference>
<dbReference type="InterPro" id="IPR002312">
    <property type="entry name" value="Asp/Asn-tRNA-synth_IIb"/>
</dbReference>
<dbReference type="InterPro" id="IPR012340">
    <property type="entry name" value="NA-bd_OB-fold"/>
</dbReference>
<dbReference type="InterPro" id="IPR004365">
    <property type="entry name" value="NA-bd_OB_tRNA"/>
</dbReference>
<dbReference type="NCBIfam" id="TIGR00457">
    <property type="entry name" value="asnS"/>
    <property type="match status" value="1"/>
</dbReference>
<dbReference type="NCBIfam" id="NF003037">
    <property type="entry name" value="PRK03932.1"/>
    <property type="match status" value="1"/>
</dbReference>
<dbReference type="PANTHER" id="PTHR22594:SF34">
    <property type="entry name" value="ASPARAGINE--TRNA LIGASE, MITOCHONDRIAL-RELATED"/>
    <property type="match status" value="1"/>
</dbReference>
<dbReference type="PANTHER" id="PTHR22594">
    <property type="entry name" value="ASPARTYL/LYSYL-TRNA SYNTHETASE"/>
    <property type="match status" value="1"/>
</dbReference>
<dbReference type="Pfam" id="PF00152">
    <property type="entry name" value="tRNA-synt_2"/>
    <property type="match status" value="1"/>
</dbReference>
<dbReference type="Pfam" id="PF01336">
    <property type="entry name" value="tRNA_anti-codon"/>
    <property type="match status" value="1"/>
</dbReference>
<dbReference type="PRINTS" id="PR01042">
    <property type="entry name" value="TRNASYNTHASP"/>
</dbReference>
<dbReference type="SUPFAM" id="SSF55681">
    <property type="entry name" value="Class II aaRS and biotin synthetases"/>
    <property type="match status" value="1"/>
</dbReference>
<dbReference type="SUPFAM" id="SSF50249">
    <property type="entry name" value="Nucleic acid-binding proteins"/>
    <property type="match status" value="1"/>
</dbReference>
<dbReference type="PROSITE" id="PS50862">
    <property type="entry name" value="AA_TRNA_LIGASE_II"/>
    <property type="match status" value="1"/>
</dbReference>
<gene>
    <name evidence="1" type="primary">asnS</name>
    <name type="ordered locus">STER_0864</name>
</gene>
<proteinExistence type="inferred from homology"/>
<evidence type="ECO:0000255" key="1">
    <source>
        <dbReference type="HAMAP-Rule" id="MF_00534"/>
    </source>
</evidence>
<sequence length="448" mass="51066">MSKQLVSIIDVPKHIGEEITIGAWVANKSGKGKIAFLQLRDGTAFFQGVAFKPNFIEKFGEEEGLEKFDTIKHLSQETSIYVTGMVKEDERSKFGYELDITDIEVIGESQGYPITPKEHGTDFLMDNRHLWLRSRKQMAIQQIRNAIIYATYDFFDKNGFIKFDSPILSSNAAEDSTELFETDYFGTPAFLSQSGQLYLEAGAMALGRVFDFGPVFRAEKSKTRRHLTEFWMMDAEYSFLSHDESLDLQEAYVKALIQGAIDRAPQALEILERDVDLLKKYIAEPFKRVSYDEAIDLLQAHEKDEDTDYEHLEHGDDFGSPHETWISNYFGVPTFVVNYPASFKAFYMKPVPGNPERVLCADLLAPEGYGEIIGGSMREDDYDALVAKMEELGMDRSEYEFYLDLRKYGSVPHGGFGIGIERMVTFVAGTKHIREAIPFPRMLHRIKP</sequence>
<reference key="1">
    <citation type="journal article" date="2006" name="Proc. Natl. Acad. Sci. U.S.A.">
        <title>Comparative genomics of the lactic acid bacteria.</title>
        <authorList>
            <person name="Makarova K.S."/>
            <person name="Slesarev A."/>
            <person name="Wolf Y.I."/>
            <person name="Sorokin A."/>
            <person name="Mirkin B."/>
            <person name="Koonin E.V."/>
            <person name="Pavlov A."/>
            <person name="Pavlova N."/>
            <person name="Karamychev V."/>
            <person name="Polouchine N."/>
            <person name="Shakhova V."/>
            <person name="Grigoriev I."/>
            <person name="Lou Y."/>
            <person name="Rohksar D."/>
            <person name="Lucas S."/>
            <person name="Huang K."/>
            <person name="Goodstein D.M."/>
            <person name="Hawkins T."/>
            <person name="Plengvidhya V."/>
            <person name="Welker D."/>
            <person name="Hughes J."/>
            <person name="Goh Y."/>
            <person name="Benson A."/>
            <person name="Baldwin K."/>
            <person name="Lee J.-H."/>
            <person name="Diaz-Muniz I."/>
            <person name="Dosti B."/>
            <person name="Smeianov V."/>
            <person name="Wechter W."/>
            <person name="Barabote R."/>
            <person name="Lorca G."/>
            <person name="Altermann E."/>
            <person name="Barrangou R."/>
            <person name="Ganesan B."/>
            <person name="Xie Y."/>
            <person name="Rawsthorne H."/>
            <person name="Tamir D."/>
            <person name="Parker C."/>
            <person name="Breidt F."/>
            <person name="Broadbent J.R."/>
            <person name="Hutkins R."/>
            <person name="O'Sullivan D."/>
            <person name="Steele J."/>
            <person name="Unlu G."/>
            <person name="Saier M.H. Jr."/>
            <person name="Klaenhammer T."/>
            <person name="Richardson P."/>
            <person name="Kozyavkin S."/>
            <person name="Weimer B.C."/>
            <person name="Mills D.A."/>
        </authorList>
    </citation>
    <scope>NUCLEOTIDE SEQUENCE [LARGE SCALE GENOMIC DNA]</scope>
    <source>
        <strain>ATCC BAA-491 / LMD-9</strain>
    </source>
</reference>
<protein>
    <recommendedName>
        <fullName evidence="1">Asparagine--tRNA ligase</fullName>
        <ecNumber evidence="1">6.1.1.22</ecNumber>
    </recommendedName>
    <alternativeName>
        <fullName evidence="1">Asparaginyl-tRNA synthetase</fullName>
        <shortName evidence="1">AsnRS</shortName>
    </alternativeName>
</protein>
<organism>
    <name type="scientific">Streptococcus thermophilus (strain ATCC BAA-491 / LMD-9)</name>
    <dbReference type="NCBI Taxonomy" id="322159"/>
    <lineage>
        <taxon>Bacteria</taxon>
        <taxon>Bacillati</taxon>
        <taxon>Bacillota</taxon>
        <taxon>Bacilli</taxon>
        <taxon>Lactobacillales</taxon>
        <taxon>Streptococcaceae</taxon>
        <taxon>Streptococcus</taxon>
    </lineage>
</organism>
<accession>Q03L20</accession>
<name>SYN_STRTD</name>
<keyword id="KW-0030">Aminoacyl-tRNA synthetase</keyword>
<keyword id="KW-0067">ATP-binding</keyword>
<keyword id="KW-0963">Cytoplasm</keyword>
<keyword id="KW-0436">Ligase</keyword>
<keyword id="KW-0547">Nucleotide-binding</keyword>
<keyword id="KW-0648">Protein biosynthesis</keyword>
<comment type="catalytic activity">
    <reaction evidence="1">
        <text>tRNA(Asn) + L-asparagine + ATP = L-asparaginyl-tRNA(Asn) + AMP + diphosphate + H(+)</text>
        <dbReference type="Rhea" id="RHEA:11180"/>
        <dbReference type="Rhea" id="RHEA-COMP:9659"/>
        <dbReference type="Rhea" id="RHEA-COMP:9674"/>
        <dbReference type="ChEBI" id="CHEBI:15378"/>
        <dbReference type="ChEBI" id="CHEBI:30616"/>
        <dbReference type="ChEBI" id="CHEBI:33019"/>
        <dbReference type="ChEBI" id="CHEBI:58048"/>
        <dbReference type="ChEBI" id="CHEBI:78442"/>
        <dbReference type="ChEBI" id="CHEBI:78515"/>
        <dbReference type="ChEBI" id="CHEBI:456215"/>
        <dbReference type="EC" id="6.1.1.22"/>
    </reaction>
</comment>
<comment type="subunit">
    <text evidence="1">Homodimer.</text>
</comment>
<comment type="subcellular location">
    <subcellularLocation>
        <location evidence="1">Cytoplasm</location>
    </subcellularLocation>
</comment>
<comment type="similarity">
    <text evidence="1">Belongs to the class-II aminoacyl-tRNA synthetase family.</text>
</comment>